<reference key="1">
    <citation type="journal article" date="2006" name="J. Gen. Virol.">
        <title>Complete nucleotide sequence, genomic organization and phylogenetic analysis of Citrus leprosis virus cytoplasmic type.</title>
        <authorList>
            <person name="Locali-Fabris E.C."/>
            <person name="Freitas-Astua J."/>
            <person name="Souza A.A."/>
            <person name="Takita M.A."/>
            <person name="Astua-Monge G."/>
            <person name="Antonioli-Luizon R."/>
            <person name="Rodrigues V."/>
            <person name="Targon M.L."/>
            <person name="Machado M.A."/>
        </authorList>
    </citation>
    <scope>NUCLEOTIDE SEQUENCE [GENOMIC RNA]</scope>
</reference>
<reference key="2">
    <citation type="submission" date="2006-01" db="EMBL/GenBank/DDBJ databases">
        <authorList>
            <person name="Locali E.C."/>
            <person name="Freitas-Astua J."/>
            <person name="Souza A.A."/>
            <person name="Takita M.A."/>
            <person name="Astua-Monge G."/>
            <person name="Antonioli-Luizon R."/>
            <person name="Rodrigues V."/>
            <person name="Targon M.L.P.N."/>
            <person name="Machado M.A."/>
        </authorList>
    </citation>
    <scope>NUCLEOTIDE SEQUENCE [GENOMIC RNA]</scope>
</reference>
<keyword id="KW-1043">Host membrane</keyword>
<keyword id="KW-0472">Membrane</keyword>
<keyword id="KW-1185">Reference proteome</keyword>
<keyword id="KW-0732">Signal</keyword>
<keyword id="KW-0812">Transmembrane</keyword>
<keyword id="KW-1133">Transmembrane helix</keyword>
<organismHost>
    <name type="scientific">Citrus sinensis</name>
    <name type="common">Sweet orange</name>
    <name type="synonym">Citrus aurantium var. sinensis</name>
    <dbReference type="NCBI Taxonomy" id="2711"/>
</organismHost>
<sequence>MALFQLFSFLNVTLGLVSNIYNSTGHLSIDKACSGYSTEVFKGVCLPSYSYVKVDRHILTKDDRYYLGYAKATNREYQLYSLHIGTYDLFGSDIMSCGARGYALGLHNGDLELVLNYCRKVDGQKHIGEVFQSCRFVEYSEHMISGIVHSIPKDLMEEFSPIGKVPYFGIMPFRTECADQCSTKQAFYAMDAYPFYNIGYWFPLCADKYIPLCYSGRTDPCPLGYEERLIKVHSYMEGFESGMKTVCKSGEYIFPAWYSGQSEIYDTVVKPYIVNVPEYCGRFSRSDKSLVYSRFGFRGTIFSGLKVITLDGIDYLTTDFCVNYSMHHYVKPLVFERMRKSFICTSSGCLYKGFDVNHLHDICTPKLIVKRHEALISSFSFINTLGTKVGAVPYDFDGNIIQFIDVFSIDGFYVYSLSHKKIQTLTVMLVQSEEEWYMKLLHFVADDILRECLSTVFKVLFSAISACLSFIIDVGGCCFRQFIFVCLDSVILLLLLLPNYTHLTFILGFTLNAYIQLVYYESCCFRAYRDIAETIDL</sequence>
<accession>Q1KZ56</accession>
<name>P61_CILVC</name>
<comment type="subcellular location">
    <subcellularLocation>
        <location evidence="2">Host membrane</location>
        <topology evidence="2">Multi-pass membrane protein</topology>
    </subcellularLocation>
</comment>
<feature type="signal peptide" evidence="1">
    <location>
        <begin position="1"/>
        <end position="15"/>
    </location>
</feature>
<feature type="chain" id="PRO_0000404536" description="Uncharacterized protein p61">
    <location>
        <begin position="16"/>
        <end position="537"/>
    </location>
</feature>
<feature type="transmembrane region" description="Helical" evidence="1">
    <location>
        <begin position="459"/>
        <end position="479"/>
    </location>
</feature>
<feature type="transmembrane region" description="Helical" evidence="1">
    <location>
        <begin position="490"/>
        <end position="510"/>
    </location>
</feature>
<evidence type="ECO:0000255" key="1"/>
<evidence type="ECO:0000305" key="2"/>
<proteinExistence type="inferred from homology"/>
<organism>
    <name type="scientific">Citrus leprosis virus C (isolate Citrus sinesis/Brazil/Cordeiropolis/2003)</name>
    <name type="common">CiLV-C</name>
    <dbReference type="NCBI Taxonomy" id="686950"/>
    <lineage>
        <taxon>Viruses</taxon>
        <taxon>Riboviria</taxon>
        <taxon>Orthornavirae</taxon>
        <taxon>Kitrinoviricota</taxon>
        <taxon>Alsuviricetes</taxon>
        <taxon>Martellivirales</taxon>
        <taxon>Kitaviridae</taxon>
        <taxon>Cilevirus</taxon>
        <taxon>Cilevirus leprosis</taxon>
    </lineage>
</organism>
<gene>
    <name type="primary">p61</name>
</gene>
<dbReference type="EMBL" id="DQ352195">
    <property type="protein sequence ID" value="ABC75824.1"/>
    <property type="molecule type" value="Genomic_RNA"/>
</dbReference>
<dbReference type="RefSeq" id="YP_654541.1">
    <property type="nucleotide sequence ID" value="NC_008170.1"/>
</dbReference>
<dbReference type="GeneID" id="4155851"/>
<dbReference type="KEGG" id="vg:4155851"/>
<dbReference type="Proteomes" id="UP000001101">
    <property type="component" value="Genome"/>
</dbReference>
<dbReference type="GO" id="GO:0033644">
    <property type="term" value="C:host cell membrane"/>
    <property type="evidence" value="ECO:0007669"/>
    <property type="project" value="UniProtKB-SubCell"/>
</dbReference>
<dbReference type="GO" id="GO:0016020">
    <property type="term" value="C:membrane"/>
    <property type="evidence" value="ECO:0007669"/>
    <property type="project" value="UniProtKB-KW"/>
</dbReference>
<protein>
    <recommendedName>
        <fullName>Uncharacterized protein p61</fullName>
    </recommendedName>
</protein>